<dbReference type="EMBL" id="AK129444">
    <property type="protein sequence ID" value="BAC98254.1"/>
    <property type="status" value="ALT_INIT"/>
    <property type="molecule type" value="mRNA"/>
</dbReference>
<dbReference type="EMBL" id="AK132164">
    <property type="protein sequence ID" value="BAE21006.1"/>
    <property type="molecule type" value="mRNA"/>
</dbReference>
<dbReference type="EMBL" id="AK133990">
    <property type="protein sequence ID" value="BAE21972.1"/>
    <property type="molecule type" value="mRNA"/>
</dbReference>
<dbReference type="EMBL" id="AK170835">
    <property type="protein sequence ID" value="BAE42063.1"/>
    <property type="molecule type" value="mRNA"/>
</dbReference>
<dbReference type="EMBL" id="BC028991">
    <property type="protein sequence ID" value="AAH28991.1"/>
    <property type="molecule type" value="mRNA"/>
</dbReference>
<dbReference type="CCDS" id="CCDS22116.1"/>
<dbReference type="RefSeq" id="NP_001350384.1">
    <property type="nucleotide sequence ID" value="NM_001363455.2"/>
</dbReference>
<dbReference type="RefSeq" id="NP_862902.1">
    <property type="nucleotide sequence ID" value="NM_181854.3"/>
</dbReference>
<dbReference type="RefSeq" id="XP_006508742.1">
    <property type="nucleotide sequence ID" value="XM_006508679.2"/>
</dbReference>
<dbReference type="SMR" id="Q8K327"/>
<dbReference type="BioGRID" id="221774">
    <property type="interactions" value="11"/>
</dbReference>
<dbReference type="FunCoup" id="Q8K327">
    <property type="interactions" value="3068"/>
</dbReference>
<dbReference type="IntAct" id="Q8K327">
    <property type="interactions" value="1"/>
</dbReference>
<dbReference type="STRING" id="10090.ENSMUSP00000057270"/>
<dbReference type="GlyGen" id="Q8K327">
    <property type="glycosylation" value="5 sites, 1 O-linked glycan (3 sites)"/>
</dbReference>
<dbReference type="iPTMnet" id="Q8K327"/>
<dbReference type="PhosphoSitePlus" id="Q8K327"/>
<dbReference type="SwissPalm" id="Q8K327"/>
<dbReference type="jPOST" id="Q8K327"/>
<dbReference type="PaxDb" id="10090-ENSMUSP00000057270"/>
<dbReference type="PeptideAtlas" id="Q8K327"/>
<dbReference type="ProteomicsDB" id="281662"/>
<dbReference type="Pumba" id="Q8K327"/>
<dbReference type="Antibodypedia" id="1883">
    <property type="antibodies" value="140 antibodies from 23 providers"/>
</dbReference>
<dbReference type="DNASU" id="101994"/>
<dbReference type="Ensembl" id="ENSMUST00000051870.8">
    <property type="protein sequence ID" value="ENSMUSP00000057270.8"/>
    <property type="gene ID" value="ENSMUSG00000047710.9"/>
</dbReference>
<dbReference type="Ensembl" id="ENSMUST00000128557.3">
    <property type="protein sequence ID" value="ENSMUSP00000120117.3"/>
    <property type="gene ID" value="ENSMUSG00000047710.9"/>
</dbReference>
<dbReference type="GeneID" id="101994"/>
<dbReference type="KEGG" id="mmu:101994"/>
<dbReference type="UCSC" id="uc009kyp.2">
    <property type="organism name" value="mouse"/>
</dbReference>
<dbReference type="AGR" id="MGI:1196398"/>
<dbReference type="CTD" id="283489"/>
<dbReference type="MGI" id="MGI:1196398">
    <property type="gene designation" value="Champ1"/>
</dbReference>
<dbReference type="VEuPathDB" id="HostDB:ENSMUSG00000047710"/>
<dbReference type="eggNOG" id="ENOG502QXNS">
    <property type="taxonomic scope" value="Eukaryota"/>
</dbReference>
<dbReference type="GeneTree" id="ENSGT00730000111351"/>
<dbReference type="HOGENOM" id="CLU_019515_0_0_1"/>
<dbReference type="InParanoid" id="Q8K327"/>
<dbReference type="OMA" id="WKPIPSI"/>
<dbReference type="OrthoDB" id="8016097at2759"/>
<dbReference type="PhylomeDB" id="Q8K327"/>
<dbReference type="TreeFam" id="TF350859"/>
<dbReference type="BioGRID-ORCS" id="101994">
    <property type="hits" value="4 hits in 76 CRISPR screens"/>
</dbReference>
<dbReference type="PRO" id="PR:Q8K327"/>
<dbReference type="Proteomes" id="UP000000589">
    <property type="component" value="Chromosome 8"/>
</dbReference>
<dbReference type="RNAct" id="Q8K327">
    <property type="molecule type" value="protein"/>
</dbReference>
<dbReference type="Bgee" id="ENSMUSG00000047710">
    <property type="expression patterns" value="Expressed in manus and 233 other cell types or tissues"/>
</dbReference>
<dbReference type="GO" id="GO:0000793">
    <property type="term" value="C:condensed chromosome"/>
    <property type="evidence" value="ECO:0000250"/>
    <property type="project" value="UniProtKB"/>
</dbReference>
<dbReference type="GO" id="GO:0005737">
    <property type="term" value="C:cytoplasm"/>
    <property type="evidence" value="ECO:0007669"/>
    <property type="project" value="UniProtKB-KW"/>
</dbReference>
<dbReference type="GO" id="GO:0000776">
    <property type="term" value="C:kinetochore"/>
    <property type="evidence" value="ECO:0000250"/>
    <property type="project" value="UniProtKB"/>
</dbReference>
<dbReference type="GO" id="GO:0016604">
    <property type="term" value="C:nuclear body"/>
    <property type="evidence" value="ECO:0007669"/>
    <property type="project" value="Ensembl"/>
</dbReference>
<dbReference type="GO" id="GO:0005634">
    <property type="term" value="C:nucleus"/>
    <property type="evidence" value="ECO:0000250"/>
    <property type="project" value="UniProtKB"/>
</dbReference>
<dbReference type="GO" id="GO:0005819">
    <property type="term" value="C:spindle"/>
    <property type="evidence" value="ECO:0000250"/>
    <property type="project" value="UniProtKB"/>
</dbReference>
<dbReference type="GO" id="GO:0008270">
    <property type="term" value="F:zinc ion binding"/>
    <property type="evidence" value="ECO:0007669"/>
    <property type="project" value="UniProtKB-KW"/>
</dbReference>
<dbReference type="GO" id="GO:0051315">
    <property type="term" value="P:attachment of mitotic spindle microtubules to kinetochore"/>
    <property type="evidence" value="ECO:0000250"/>
    <property type="project" value="UniProtKB"/>
</dbReference>
<dbReference type="GO" id="GO:0034501">
    <property type="term" value="P:protein localization to kinetochore"/>
    <property type="evidence" value="ECO:0000250"/>
    <property type="project" value="UniProtKB"/>
</dbReference>
<dbReference type="GO" id="GO:0035372">
    <property type="term" value="P:protein localization to microtubule"/>
    <property type="evidence" value="ECO:0000250"/>
    <property type="project" value="UniProtKB"/>
</dbReference>
<dbReference type="GO" id="GO:0031134">
    <property type="term" value="P:sister chromatid biorientation"/>
    <property type="evidence" value="ECO:0000250"/>
    <property type="project" value="UniProtKB"/>
</dbReference>
<dbReference type="FunFam" id="3.30.160.60:FF:000879">
    <property type="entry name" value="Chromosome alignment maintaining phosphoprotein 1"/>
    <property type="match status" value="1"/>
</dbReference>
<dbReference type="Gene3D" id="3.30.160.60">
    <property type="entry name" value="Classic Zinc Finger"/>
    <property type="match status" value="2"/>
</dbReference>
<dbReference type="InterPro" id="IPR039330">
    <property type="entry name" value="CAMP"/>
</dbReference>
<dbReference type="InterPro" id="IPR036236">
    <property type="entry name" value="Znf_C2H2_sf"/>
</dbReference>
<dbReference type="InterPro" id="IPR013087">
    <property type="entry name" value="Znf_C2H2_type"/>
</dbReference>
<dbReference type="PANTHER" id="PTHR37354">
    <property type="entry name" value="CHROMOSOME ALIGNMENT-MAINTAINING PHOSPHOPROTEIN 1"/>
    <property type="match status" value="1"/>
</dbReference>
<dbReference type="PANTHER" id="PTHR37354:SF1">
    <property type="entry name" value="CHROMOSOME ALIGNMENT-MAINTAINING PHOSPHOPROTEIN 1"/>
    <property type="match status" value="1"/>
</dbReference>
<dbReference type="SMART" id="SM00355">
    <property type="entry name" value="ZnF_C2H2"/>
    <property type="match status" value="5"/>
</dbReference>
<dbReference type="SUPFAM" id="SSF57667">
    <property type="entry name" value="beta-beta-alpha zinc fingers"/>
    <property type="match status" value="1"/>
</dbReference>
<dbReference type="PROSITE" id="PS00028">
    <property type="entry name" value="ZINC_FINGER_C2H2_1"/>
    <property type="match status" value="1"/>
</dbReference>
<dbReference type="PROSITE" id="PS50157">
    <property type="entry name" value="ZINC_FINGER_C2H2_2"/>
    <property type="match status" value="1"/>
</dbReference>
<accession>Q8K327</accession>
<accession>Q3UZ85</accession>
<accession>Q6ZPI1</accession>
<sequence>MEVCQELRKPALSLECGHCSFRGTDYENVQLHMGSIHPEFCDDMDAGGLGKLIFYQKSAKLFHCHKCFFTSKLYANVYYHITARHAASDKWSEQPKEQPSKDTESGKSPSPPERQNPAFDPAEARPTPALPMEAQKTSPSLCPESQASGPPVLEPQGAGPLISPEPQAPCLPAEASKAAPVPCPERVDPPCELPELEKPERGPSPESVKSALVSSKPPKHSSFADTGAAPSALSPESPVLATSPEPWGPSLSASPESRKPARTASPEPRKPSPAESPELWKPFPAIASEPRRPTPAVSPGSWKPGPPGSPRPWKSSPSATSGPWKSSKPVQPMSPGPWKPIPSVSPGPWKPAPSMSTASWKSSVSSGSWKTPPTSPESWKSGPPELRKTALPLSPEHWKAVPPVSPELRRPGPPLSPEIRSPAGSPELKKPSSSPDLWKVSPDQRKTSPASLDFPEPQKSSCGSPPDLWKSSFIMESQKPNVFSETRKHTASGSSESPKVASDIWKPVLSIDAEPRKSTLFPEPTKAVLPASPEPRKRALFPESRKHVFLPELPKSAVFSDAQKAPELSEEIQLEAVDNAKCDSLAQEGLLATPKKLLDEALSPSSKKLKKDSQENSDAELSSSEYIRADLDTLDTKGQESSSDQEQVDVESIDFSKENKMEMGSTEQAKNVLQFTEEKEAFISEEEIAKYMKRGKGKYYCKICCCRAMKKGAVLHHLVNKHNVHSPYKCTICGKAFLLESLLKNHVAAHGQSLLKCPRCNFESNFPRGFKKHLTHCQSRHNEEVNKKLMEALESPLEEQQI</sequence>
<feature type="chain" id="PRO_0000248320" description="Chromosome alignment-maintaining phosphoprotein 1">
    <location>
        <begin position="1"/>
        <end position="802"/>
    </location>
</feature>
<feature type="zinc finger region" description="C2H2-type" evidence="3">
    <location>
        <begin position="728"/>
        <end position="750"/>
    </location>
</feature>
<feature type="region of interest" description="Disordered" evidence="4">
    <location>
        <begin position="88"/>
        <end position="475"/>
    </location>
</feature>
<feature type="region of interest" description="Mediates interaction with MAD2L2" evidence="1">
    <location>
        <begin position="261"/>
        <end position="479"/>
    </location>
</feature>
<feature type="region of interest" description="Mediates localization to the spindle and the kinetochore and is required for the attachment of spindle microtubules to the kinetochore" evidence="1">
    <location>
        <begin position="440"/>
        <end position="580"/>
    </location>
</feature>
<feature type="region of interest" description="Mediates localization to the chromosome and the spindle and negatively regulates chromosome alignment" evidence="1">
    <location>
        <begin position="581"/>
        <end position="802"/>
    </location>
</feature>
<feature type="region of interest" description="Disordered" evidence="4">
    <location>
        <begin position="603"/>
        <end position="625"/>
    </location>
</feature>
<feature type="compositionally biased region" description="Basic and acidic residues" evidence="4">
    <location>
        <begin position="88"/>
        <end position="105"/>
    </location>
</feature>
<feature type="compositionally biased region" description="Polar residues" evidence="4">
    <location>
        <begin position="135"/>
        <end position="148"/>
    </location>
</feature>
<feature type="compositionally biased region" description="Basic and acidic residues" evidence="4">
    <location>
        <begin position="185"/>
        <end position="203"/>
    </location>
</feature>
<feature type="compositionally biased region" description="Pro residues" evidence="4">
    <location>
        <begin position="332"/>
        <end position="351"/>
    </location>
</feature>
<feature type="compositionally biased region" description="Low complexity" evidence="4">
    <location>
        <begin position="354"/>
        <end position="368"/>
    </location>
</feature>
<feature type="compositionally biased region" description="Polar residues" evidence="4">
    <location>
        <begin position="369"/>
        <end position="378"/>
    </location>
</feature>
<feature type="modified residue" description="N-acetylmethionine" evidence="2">
    <location>
        <position position="1"/>
    </location>
</feature>
<feature type="modified residue" description="Phosphoserine" evidence="2">
    <location>
        <position position="108"/>
    </location>
</feature>
<feature type="modified residue" description="Phosphoserine" evidence="2">
    <location>
        <position position="204"/>
    </location>
</feature>
<feature type="modified residue" description="Phosphoserine" evidence="2">
    <location>
        <position position="207"/>
    </location>
</feature>
<feature type="modified residue" description="Phosphoserine" evidence="8">
    <location>
        <position position="234"/>
    </location>
</feature>
<feature type="modified residue" description="Phosphoserine" evidence="8">
    <location>
        <position position="237"/>
    </location>
</feature>
<feature type="modified residue" description="Phosphoserine" evidence="8">
    <location>
        <position position="243"/>
    </location>
</feature>
<feature type="modified residue" description="Phosphoserine" evidence="8">
    <location>
        <position position="252"/>
    </location>
</feature>
<feature type="modified residue" description="Phosphoserine" evidence="8">
    <location>
        <position position="254"/>
    </location>
</feature>
<feature type="modified residue" description="Phosphoserine" evidence="2">
    <location>
        <position position="265"/>
    </location>
</feature>
<feature type="modified residue" description="Phosphoserine" evidence="8">
    <location>
        <position position="272"/>
    </location>
</feature>
<feature type="modified residue" description="Phosphoserine" evidence="8">
    <location>
        <position position="276"/>
    </location>
</feature>
<feature type="modified residue" description="Phosphoserine" evidence="8">
    <location>
        <position position="298"/>
    </location>
</feature>
<feature type="modified residue" description="Phosphoserine" evidence="6 8">
    <location>
        <position position="309"/>
    </location>
</feature>
<feature type="modified residue" description="Phosphoserine" evidence="2">
    <location>
        <position position="334"/>
    </location>
</feature>
<feature type="modified residue" description="Phosphoserine" evidence="2">
    <location>
        <position position="345"/>
    </location>
</feature>
<feature type="modified residue" description="Phosphoserine" evidence="2">
    <location>
        <position position="365"/>
    </location>
</feature>
<feature type="modified residue" description="Phosphothreonine" evidence="8">
    <location>
        <position position="371"/>
    </location>
</feature>
<feature type="modified residue" description="Phosphoserine" evidence="2">
    <location>
        <position position="375"/>
    </location>
</feature>
<feature type="modified residue" description="Phosphoserine" evidence="2">
    <location>
        <position position="394"/>
    </location>
</feature>
<feature type="modified residue" description="Phosphoserine" evidence="2">
    <location>
        <position position="405"/>
    </location>
</feature>
<feature type="modified residue" description="Phosphoserine" evidence="2">
    <location>
        <position position="416"/>
    </location>
</feature>
<feature type="modified residue" description="Phosphoserine" evidence="2">
    <location>
        <position position="421"/>
    </location>
</feature>
<feature type="modified residue" description="Phosphoserine" evidence="2">
    <location>
        <position position="425"/>
    </location>
</feature>
<feature type="modified residue" description="Phosphoserine" evidence="2">
    <location>
        <position position="432"/>
    </location>
</feature>
<feature type="modified residue" description="Phosphoserine" evidence="8">
    <location>
        <position position="434"/>
    </location>
</feature>
<feature type="modified residue" description="Phosphoserine" evidence="8">
    <location>
        <position position="441"/>
    </location>
</feature>
<feature type="modified residue" description="Phosphothreonine" evidence="2">
    <location>
        <position position="447"/>
    </location>
</feature>
<feature type="modified residue" description="Phosphoserine" evidence="2">
    <location>
        <position position="448"/>
    </location>
</feature>
<feature type="modified residue" description="Phosphoserine" evidence="2">
    <location>
        <position position="451"/>
    </location>
</feature>
<feature type="modified residue" description="Phosphoserine" evidence="2">
    <location>
        <position position="461"/>
    </location>
</feature>
<feature type="modified residue" description="N6-acetyllysine; alternate" evidence="2">
    <location>
        <position position="479"/>
    </location>
</feature>
<feature type="modified residue" description="Phosphoserine" evidence="2">
    <location>
        <position position="497"/>
    </location>
</feature>
<feature type="modified residue" description="Phosphoserine" evidence="2">
    <location>
        <position position="502"/>
    </location>
</feature>
<feature type="modified residue" description="Phosphoserine" evidence="2">
    <location>
        <position position="532"/>
    </location>
</feature>
<feature type="modified residue" description="Phosphothreonine" evidence="8">
    <location>
        <position position="593"/>
    </location>
</feature>
<feature type="modified residue" description="Phosphoserine" evidence="7 8">
    <location>
        <position position="603"/>
    </location>
</feature>
<feature type="modified residue" description="Phosphoserine" evidence="2">
    <location>
        <position position="605"/>
    </location>
</feature>
<feature type="modified residue" description="Phosphoserine" evidence="8">
    <location>
        <position position="617"/>
    </location>
</feature>
<feature type="modified residue" description="Phosphoserine" evidence="8">
    <location>
        <position position="622"/>
    </location>
</feature>
<feature type="modified residue" description="Phosphoserine" evidence="8">
    <location>
        <position position="641"/>
    </location>
</feature>
<feature type="modified residue" description="Phosphoserine" evidence="8">
    <location>
        <position position="642"/>
    </location>
</feature>
<feature type="modified residue" description="Phosphoserine" evidence="8">
    <location>
        <position position="643"/>
    </location>
</feature>
<feature type="modified residue" description="Phosphoserine" evidence="2">
    <location>
        <position position="665"/>
    </location>
</feature>
<feature type="modified residue" description="Phosphoserine" evidence="2">
    <location>
        <position position="726"/>
    </location>
</feature>
<feature type="cross-link" description="Glycyl lysine isopeptide (Lys-Gly) (interchain with G-Cter in SUMO2); alternate" evidence="2">
    <location>
        <position position="479"/>
    </location>
</feature>
<feature type="cross-link" description="Glycyl lysine isopeptide (Lys-Gly) (interchain with G-Cter in SUMO2)" evidence="2">
    <location>
        <position position="555"/>
    </location>
</feature>
<feature type="cross-link" description="Glycyl lysine isopeptide (Lys-Gly) (interchain with G-Cter in SUMO2)" evidence="2">
    <location>
        <position position="596"/>
    </location>
</feature>
<feature type="cross-link" description="Glycyl lysine isopeptide (Lys-Gly) (interchain with G-Cter in SUMO2)" evidence="2">
    <location>
        <position position="660"/>
    </location>
</feature>
<feature type="cross-link" description="Glycyl lysine isopeptide (Lys-Gly) (interchain with G-Cter in SUMO2)" evidence="2">
    <location>
        <position position="679"/>
    </location>
</feature>
<feature type="sequence conflict" description="In Ref. 1; BAC98254." evidence="5" ref="1">
    <original>C</original>
    <variation>S</variation>
    <location>
        <position position="170"/>
    </location>
</feature>
<feature type="sequence conflict" description="In Ref. 1; BAC98254." evidence="5" ref="1">
    <original>P</original>
    <variation>T</variation>
    <location>
        <position position="244"/>
    </location>
</feature>
<feature type="sequence conflict" description="In Ref. 2; BAE21972." evidence="5" ref="2">
    <original>P</original>
    <variation>H</variation>
    <location>
        <position position="335"/>
    </location>
</feature>
<feature type="sequence conflict" description="In Ref. 1; BAC98254." evidence="5" ref="1">
    <original>F</original>
    <variation>L</variation>
    <location>
        <position position="549"/>
    </location>
</feature>
<feature type="sequence conflict" description="In Ref. 2; BAE21972." evidence="5" ref="2">
    <original>M</original>
    <variation>K</variation>
    <location>
        <position position="661"/>
    </location>
</feature>
<keyword id="KW-0007">Acetylation</keyword>
<keyword id="KW-0137">Centromere</keyword>
<keyword id="KW-0158">Chromosome</keyword>
<keyword id="KW-0963">Cytoplasm</keyword>
<keyword id="KW-0206">Cytoskeleton</keyword>
<keyword id="KW-1017">Isopeptide bond</keyword>
<keyword id="KW-0995">Kinetochore</keyword>
<keyword id="KW-0479">Metal-binding</keyword>
<keyword id="KW-0539">Nucleus</keyword>
<keyword id="KW-0597">Phosphoprotein</keyword>
<keyword id="KW-1185">Reference proteome</keyword>
<keyword id="KW-0832">Ubl conjugation</keyword>
<keyword id="KW-0862">Zinc</keyword>
<keyword id="KW-0863">Zinc-finger</keyword>
<comment type="function">
    <text evidence="1">Required for proper alignment of chromosomes at metaphase and their accurate segregation during mitosis. Involved in the maintenance of spindle microtubules attachment to the kinetochore during sister chromatid biorientation. May recruit CENPE and CENPF to the kinetochore (By similarity).</text>
</comment>
<comment type="subunit">
    <text evidence="1">Interacts with MAD2L2. Interacts with POGZ, CBX1, CBX3 and CBX5 (By similarity).</text>
</comment>
<comment type="subcellular location">
    <subcellularLocation>
        <location evidence="1">Nucleus</location>
    </subcellularLocation>
    <subcellularLocation>
        <location evidence="1">Chromosome</location>
    </subcellularLocation>
    <subcellularLocation>
        <location evidence="1">Chromosome</location>
        <location evidence="1">Centromere</location>
        <location evidence="1">Kinetochore</location>
    </subcellularLocation>
    <subcellularLocation>
        <location evidence="1">Cytoplasm</location>
        <location evidence="1">Cytoskeleton</location>
        <location evidence="1">Spindle</location>
    </subcellularLocation>
</comment>
<comment type="PTM">
    <text evidence="1">Phosphorylated by CDK1. Mitotic phosphorylation is required for the attachment of spindle microtubules to the kinetochore (By similarity).</text>
</comment>
<comment type="sequence caution" evidence="5">
    <conflict type="erroneous initiation">
        <sequence resource="EMBL-CDS" id="BAC98254"/>
    </conflict>
    <text>Extended N-terminus.</text>
</comment>
<evidence type="ECO:0000250" key="1"/>
<evidence type="ECO:0000250" key="2">
    <source>
        <dbReference type="UniProtKB" id="Q96JM3"/>
    </source>
</evidence>
<evidence type="ECO:0000255" key="3">
    <source>
        <dbReference type="PROSITE-ProRule" id="PRU00042"/>
    </source>
</evidence>
<evidence type="ECO:0000256" key="4">
    <source>
        <dbReference type="SAM" id="MobiDB-lite"/>
    </source>
</evidence>
<evidence type="ECO:0000305" key="5"/>
<evidence type="ECO:0007744" key="6">
    <source>
    </source>
</evidence>
<evidence type="ECO:0007744" key="7">
    <source>
    </source>
</evidence>
<evidence type="ECO:0007744" key="8">
    <source>
    </source>
</evidence>
<organism>
    <name type="scientific">Mus musculus</name>
    <name type="common">Mouse</name>
    <dbReference type="NCBI Taxonomy" id="10090"/>
    <lineage>
        <taxon>Eukaryota</taxon>
        <taxon>Metazoa</taxon>
        <taxon>Chordata</taxon>
        <taxon>Craniata</taxon>
        <taxon>Vertebrata</taxon>
        <taxon>Euteleostomi</taxon>
        <taxon>Mammalia</taxon>
        <taxon>Eutheria</taxon>
        <taxon>Euarchontoglires</taxon>
        <taxon>Glires</taxon>
        <taxon>Rodentia</taxon>
        <taxon>Myomorpha</taxon>
        <taxon>Muroidea</taxon>
        <taxon>Muridae</taxon>
        <taxon>Murinae</taxon>
        <taxon>Mus</taxon>
        <taxon>Mus</taxon>
    </lineage>
</organism>
<gene>
    <name type="primary">Champ1</name>
    <name type="synonym">D8Ertd457e</name>
    <name type="synonym">Kiaa1802</name>
    <name type="synonym">Zfp828</name>
    <name type="synonym">Znf828</name>
</gene>
<protein>
    <recommendedName>
        <fullName>Chromosome alignment-maintaining phosphoprotein 1</fullName>
    </recommendedName>
    <alternativeName>
        <fullName>Zinc finger protein 828</fullName>
    </alternativeName>
</protein>
<name>CHAP1_MOUSE</name>
<proteinExistence type="evidence at protein level"/>
<reference key="1">
    <citation type="journal article" date="2003" name="DNA Res.">
        <title>Prediction of the coding sequences of mouse homologues of KIAA gene: III. The complete nucleotide sequences of 500 mouse KIAA-homologous cDNAs identified by screening of terminal sequences of cDNA clones randomly sampled from size-fractionated libraries.</title>
        <authorList>
            <person name="Okazaki N."/>
            <person name="Kikuno R."/>
            <person name="Ohara R."/>
            <person name="Inamoto S."/>
            <person name="Koseki H."/>
            <person name="Hiraoka S."/>
            <person name="Saga Y."/>
            <person name="Nagase T."/>
            <person name="Ohara O."/>
            <person name="Koga H."/>
        </authorList>
    </citation>
    <scope>NUCLEOTIDE SEQUENCE [LARGE SCALE MRNA]</scope>
    <source>
        <tissue>Embryonic tail</tissue>
    </source>
</reference>
<reference key="2">
    <citation type="journal article" date="2005" name="Science">
        <title>The transcriptional landscape of the mammalian genome.</title>
        <authorList>
            <person name="Carninci P."/>
            <person name="Kasukawa T."/>
            <person name="Katayama S."/>
            <person name="Gough J."/>
            <person name="Frith M.C."/>
            <person name="Maeda N."/>
            <person name="Oyama R."/>
            <person name="Ravasi T."/>
            <person name="Lenhard B."/>
            <person name="Wells C."/>
            <person name="Kodzius R."/>
            <person name="Shimokawa K."/>
            <person name="Bajic V.B."/>
            <person name="Brenner S.E."/>
            <person name="Batalov S."/>
            <person name="Forrest A.R."/>
            <person name="Zavolan M."/>
            <person name="Davis M.J."/>
            <person name="Wilming L.G."/>
            <person name="Aidinis V."/>
            <person name="Allen J.E."/>
            <person name="Ambesi-Impiombato A."/>
            <person name="Apweiler R."/>
            <person name="Aturaliya R.N."/>
            <person name="Bailey T.L."/>
            <person name="Bansal M."/>
            <person name="Baxter L."/>
            <person name="Beisel K.W."/>
            <person name="Bersano T."/>
            <person name="Bono H."/>
            <person name="Chalk A.M."/>
            <person name="Chiu K.P."/>
            <person name="Choudhary V."/>
            <person name="Christoffels A."/>
            <person name="Clutterbuck D.R."/>
            <person name="Crowe M.L."/>
            <person name="Dalla E."/>
            <person name="Dalrymple B.P."/>
            <person name="de Bono B."/>
            <person name="Della Gatta G."/>
            <person name="di Bernardo D."/>
            <person name="Down T."/>
            <person name="Engstrom P."/>
            <person name="Fagiolini M."/>
            <person name="Faulkner G."/>
            <person name="Fletcher C.F."/>
            <person name="Fukushima T."/>
            <person name="Furuno M."/>
            <person name="Futaki S."/>
            <person name="Gariboldi M."/>
            <person name="Georgii-Hemming P."/>
            <person name="Gingeras T.R."/>
            <person name="Gojobori T."/>
            <person name="Green R.E."/>
            <person name="Gustincich S."/>
            <person name="Harbers M."/>
            <person name="Hayashi Y."/>
            <person name="Hensch T.K."/>
            <person name="Hirokawa N."/>
            <person name="Hill D."/>
            <person name="Huminiecki L."/>
            <person name="Iacono M."/>
            <person name="Ikeo K."/>
            <person name="Iwama A."/>
            <person name="Ishikawa T."/>
            <person name="Jakt M."/>
            <person name="Kanapin A."/>
            <person name="Katoh M."/>
            <person name="Kawasawa Y."/>
            <person name="Kelso J."/>
            <person name="Kitamura H."/>
            <person name="Kitano H."/>
            <person name="Kollias G."/>
            <person name="Krishnan S.P."/>
            <person name="Kruger A."/>
            <person name="Kummerfeld S.K."/>
            <person name="Kurochkin I.V."/>
            <person name="Lareau L.F."/>
            <person name="Lazarevic D."/>
            <person name="Lipovich L."/>
            <person name="Liu J."/>
            <person name="Liuni S."/>
            <person name="McWilliam S."/>
            <person name="Madan Babu M."/>
            <person name="Madera M."/>
            <person name="Marchionni L."/>
            <person name="Matsuda H."/>
            <person name="Matsuzawa S."/>
            <person name="Miki H."/>
            <person name="Mignone F."/>
            <person name="Miyake S."/>
            <person name="Morris K."/>
            <person name="Mottagui-Tabar S."/>
            <person name="Mulder N."/>
            <person name="Nakano N."/>
            <person name="Nakauchi H."/>
            <person name="Ng P."/>
            <person name="Nilsson R."/>
            <person name="Nishiguchi S."/>
            <person name="Nishikawa S."/>
            <person name="Nori F."/>
            <person name="Ohara O."/>
            <person name="Okazaki Y."/>
            <person name="Orlando V."/>
            <person name="Pang K.C."/>
            <person name="Pavan W.J."/>
            <person name="Pavesi G."/>
            <person name="Pesole G."/>
            <person name="Petrovsky N."/>
            <person name="Piazza S."/>
            <person name="Reed J."/>
            <person name="Reid J.F."/>
            <person name="Ring B.Z."/>
            <person name="Ringwald M."/>
            <person name="Rost B."/>
            <person name="Ruan Y."/>
            <person name="Salzberg S.L."/>
            <person name="Sandelin A."/>
            <person name="Schneider C."/>
            <person name="Schoenbach C."/>
            <person name="Sekiguchi K."/>
            <person name="Semple C.A."/>
            <person name="Seno S."/>
            <person name="Sessa L."/>
            <person name="Sheng Y."/>
            <person name="Shibata Y."/>
            <person name="Shimada H."/>
            <person name="Shimada K."/>
            <person name="Silva D."/>
            <person name="Sinclair B."/>
            <person name="Sperling S."/>
            <person name="Stupka E."/>
            <person name="Sugiura K."/>
            <person name="Sultana R."/>
            <person name="Takenaka Y."/>
            <person name="Taki K."/>
            <person name="Tammoja K."/>
            <person name="Tan S.L."/>
            <person name="Tang S."/>
            <person name="Taylor M.S."/>
            <person name="Tegner J."/>
            <person name="Teichmann S.A."/>
            <person name="Ueda H.R."/>
            <person name="van Nimwegen E."/>
            <person name="Verardo R."/>
            <person name="Wei C.L."/>
            <person name="Yagi K."/>
            <person name="Yamanishi H."/>
            <person name="Zabarovsky E."/>
            <person name="Zhu S."/>
            <person name="Zimmer A."/>
            <person name="Hide W."/>
            <person name="Bult C."/>
            <person name="Grimmond S.M."/>
            <person name="Teasdale R.D."/>
            <person name="Liu E.T."/>
            <person name="Brusic V."/>
            <person name="Quackenbush J."/>
            <person name="Wahlestedt C."/>
            <person name="Mattick J.S."/>
            <person name="Hume D.A."/>
            <person name="Kai C."/>
            <person name="Sasaki D."/>
            <person name="Tomaru Y."/>
            <person name="Fukuda S."/>
            <person name="Kanamori-Katayama M."/>
            <person name="Suzuki M."/>
            <person name="Aoki J."/>
            <person name="Arakawa T."/>
            <person name="Iida J."/>
            <person name="Imamura K."/>
            <person name="Itoh M."/>
            <person name="Kato T."/>
            <person name="Kawaji H."/>
            <person name="Kawagashira N."/>
            <person name="Kawashima T."/>
            <person name="Kojima M."/>
            <person name="Kondo S."/>
            <person name="Konno H."/>
            <person name="Nakano K."/>
            <person name="Ninomiya N."/>
            <person name="Nishio T."/>
            <person name="Okada M."/>
            <person name="Plessy C."/>
            <person name="Shibata K."/>
            <person name="Shiraki T."/>
            <person name="Suzuki S."/>
            <person name="Tagami M."/>
            <person name="Waki K."/>
            <person name="Watahiki A."/>
            <person name="Okamura-Oho Y."/>
            <person name="Suzuki H."/>
            <person name="Kawai J."/>
            <person name="Hayashizaki Y."/>
        </authorList>
    </citation>
    <scope>NUCLEOTIDE SEQUENCE [LARGE SCALE MRNA]</scope>
    <source>
        <strain>C57BL/6J</strain>
        <strain>NOD</strain>
        <tissue>Head</tissue>
    </source>
</reference>
<reference key="3">
    <citation type="journal article" date="2004" name="Genome Res.">
        <title>The status, quality, and expansion of the NIH full-length cDNA project: the Mammalian Gene Collection (MGC).</title>
        <authorList>
            <consortium name="The MGC Project Team"/>
        </authorList>
    </citation>
    <scope>NUCLEOTIDE SEQUENCE [LARGE SCALE MRNA]</scope>
    <source>
        <strain>FVB/N</strain>
        <tissue>Mammary tumor</tissue>
    </source>
</reference>
<reference key="4">
    <citation type="journal article" date="2007" name="Proc. Natl. Acad. Sci. U.S.A.">
        <title>Large-scale phosphorylation analysis of mouse liver.</title>
        <authorList>
            <person name="Villen J."/>
            <person name="Beausoleil S.A."/>
            <person name="Gerber S.A."/>
            <person name="Gygi S.P."/>
        </authorList>
    </citation>
    <scope>PHOSPHORYLATION [LARGE SCALE ANALYSIS] AT SER-309</scope>
    <scope>IDENTIFICATION BY MASS SPECTROMETRY [LARGE SCALE ANALYSIS]</scope>
    <source>
        <tissue>Liver</tissue>
    </source>
</reference>
<reference key="5">
    <citation type="journal article" date="2009" name="Immunity">
        <title>The phagosomal proteome in interferon-gamma-activated macrophages.</title>
        <authorList>
            <person name="Trost M."/>
            <person name="English L."/>
            <person name="Lemieux S."/>
            <person name="Courcelles M."/>
            <person name="Desjardins M."/>
            <person name="Thibault P."/>
        </authorList>
    </citation>
    <scope>IDENTIFICATION BY MASS SPECTROMETRY [LARGE SCALE ANALYSIS]</scope>
</reference>
<reference key="6">
    <citation type="journal article" date="2009" name="Mol. Cell. Proteomics">
        <title>Large scale localization of protein phosphorylation by use of electron capture dissociation mass spectrometry.</title>
        <authorList>
            <person name="Sweet S.M."/>
            <person name="Bailey C.M."/>
            <person name="Cunningham D.L."/>
            <person name="Heath J.K."/>
            <person name="Cooper H.J."/>
        </authorList>
    </citation>
    <scope>PHOSPHORYLATION [LARGE SCALE ANALYSIS] AT SER-603</scope>
    <scope>IDENTIFICATION BY MASS SPECTROMETRY [LARGE SCALE ANALYSIS]</scope>
    <source>
        <tissue>Embryonic fibroblast</tissue>
    </source>
</reference>
<reference key="7">
    <citation type="journal article" date="2010" name="Cell">
        <title>A tissue-specific atlas of mouse protein phosphorylation and expression.</title>
        <authorList>
            <person name="Huttlin E.L."/>
            <person name="Jedrychowski M.P."/>
            <person name="Elias J.E."/>
            <person name="Goswami T."/>
            <person name="Rad R."/>
            <person name="Beausoleil S.A."/>
            <person name="Villen J."/>
            <person name="Haas W."/>
            <person name="Sowa M.E."/>
            <person name="Gygi S.P."/>
        </authorList>
    </citation>
    <scope>PHOSPHORYLATION [LARGE SCALE ANALYSIS] AT SER-234; SER-237; SER-243; SER-252; SER-254; SER-272; SER-276; SER-298; SER-309; THR-371; SER-434; SER-441; THR-593; SER-603; SER-617; SER-622; SER-641; SER-642 AND SER-643</scope>
    <scope>IDENTIFICATION BY MASS SPECTROMETRY [LARGE SCALE ANALYSIS]</scope>
    <source>
        <tissue>Brain</tissue>
        <tissue>Brown adipose tissue</tissue>
        <tissue>Heart</tissue>
        <tissue>Kidney</tissue>
        <tissue>Liver</tissue>
        <tissue>Lung</tissue>
        <tissue>Pancreas</tissue>
        <tissue>Spleen</tissue>
        <tissue>Testis</tissue>
    </source>
</reference>